<protein>
    <recommendedName>
        <fullName evidence="1">Thiamine-phosphate synthase</fullName>
        <shortName evidence="1">TP synthase</shortName>
        <shortName evidence="1">TPS</shortName>
        <ecNumber evidence="1">2.5.1.3</ecNumber>
    </recommendedName>
    <alternativeName>
        <fullName evidence="1">Thiamine-phosphate pyrophosphorylase</fullName>
        <shortName evidence="1">TMP pyrophosphorylase</shortName>
        <shortName evidence="1">TMP-PPase</shortName>
    </alternativeName>
</protein>
<evidence type="ECO:0000255" key="1">
    <source>
        <dbReference type="HAMAP-Rule" id="MF_00097"/>
    </source>
</evidence>
<dbReference type="EC" id="2.5.1.3" evidence="1"/>
<dbReference type="EMBL" id="CP000822">
    <property type="protein sequence ID" value="ABV14093.1"/>
    <property type="molecule type" value="Genomic_DNA"/>
</dbReference>
<dbReference type="RefSeq" id="WP_012133802.1">
    <property type="nucleotide sequence ID" value="NC_009792.1"/>
</dbReference>
<dbReference type="SMR" id="A8AKT0"/>
<dbReference type="STRING" id="290338.CKO_02993"/>
<dbReference type="GeneID" id="45136807"/>
<dbReference type="KEGG" id="cko:CKO_02993"/>
<dbReference type="HOGENOM" id="CLU_018272_3_3_6"/>
<dbReference type="OrthoDB" id="9810880at2"/>
<dbReference type="UniPathway" id="UPA00060">
    <property type="reaction ID" value="UER00141"/>
</dbReference>
<dbReference type="Proteomes" id="UP000008148">
    <property type="component" value="Chromosome"/>
</dbReference>
<dbReference type="GO" id="GO:0005737">
    <property type="term" value="C:cytoplasm"/>
    <property type="evidence" value="ECO:0007669"/>
    <property type="project" value="TreeGrafter"/>
</dbReference>
<dbReference type="GO" id="GO:0000287">
    <property type="term" value="F:magnesium ion binding"/>
    <property type="evidence" value="ECO:0007669"/>
    <property type="project" value="UniProtKB-UniRule"/>
</dbReference>
<dbReference type="GO" id="GO:0004789">
    <property type="term" value="F:thiamine-phosphate diphosphorylase activity"/>
    <property type="evidence" value="ECO:0007669"/>
    <property type="project" value="UniProtKB-UniRule"/>
</dbReference>
<dbReference type="GO" id="GO:0009228">
    <property type="term" value="P:thiamine biosynthetic process"/>
    <property type="evidence" value="ECO:0007669"/>
    <property type="project" value="UniProtKB-KW"/>
</dbReference>
<dbReference type="GO" id="GO:0009229">
    <property type="term" value="P:thiamine diphosphate biosynthetic process"/>
    <property type="evidence" value="ECO:0007669"/>
    <property type="project" value="UniProtKB-UniRule"/>
</dbReference>
<dbReference type="CDD" id="cd00564">
    <property type="entry name" value="TMP_TenI"/>
    <property type="match status" value="1"/>
</dbReference>
<dbReference type="FunFam" id="3.20.20.70:FF:000064">
    <property type="entry name" value="Thiamine-phosphate synthase"/>
    <property type="match status" value="1"/>
</dbReference>
<dbReference type="Gene3D" id="3.20.20.70">
    <property type="entry name" value="Aldolase class I"/>
    <property type="match status" value="1"/>
</dbReference>
<dbReference type="HAMAP" id="MF_00097">
    <property type="entry name" value="TMP_synthase"/>
    <property type="match status" value="1"/>
</dbReference>
<dbReference type="InterPro" id="IPR013785">
    <property type="entry name" value="Aldolase_TIM"/>
</dbReference>
<dbReference type="InterPro" id="IPR036206">
    <property type="entry name" value="ThiamineP_synth_sf"/>
</dbReference>
<dbReference type="InterPro" id="IPR022998">
    <property type="entry name" value="ThiamineP_synth_TenI"/>
</dbReference>
<dbReference type="InterPro" id="IPR034291">
    <property type="entry name" value="TMP_synthase"/>
</dbReference>
<dbReference type="NCBIfam" id="NF002904">
    <property type="entry name" value="PRK03512.1"/>
    <property type="match status" value="1"/>
</dbReference>
<dbReference type="NCBIfam" id="TIGR00693">
    <property type="entry name" value="thiE"/>
    <property type="match status" value="1"/>
</dbReference>
<dbReference type="PANTHER" id="PTHR20857">
    <property type="entry name" value="THIAMINE-PHOSPHATE PYROPHOSPHORYLASE"/>
    <property type="match status" value="1"/>
</dbReference>
<dbReference type="PANTHER" id="PTHR20857:SF15">
    <property type="entry name" value="THIAMINE-PHOSPHATE SYNTHASE"/>
    <property type="match status" value="1"/>
</dbReference>
<dbReference type="Pfam" id="PF02581">
    <property type="entry name" value="TMP-TENI"/>
    <property type="match status" value="1"/>
</dbReference>
<dbReference type="SUPFAM" id="SSF51391">
    <property type="entry name" value="Thiamin phosphate synthase"/>
    <property type="match status" value="1"/>
</dbReference>
<reference key="1">
    <citation type="submission" date="2007-08" db="EMBL/GenBank/DDBJ databases">
        <authorList>
            <consortium name="The Citrobacter koseri Genome Sequencing Project"/>
            <person name="McClelland M."/>
            <person name="Sanderson E.K."/>
            <person name="Porwollik S."/>
            <person name="Spieth J."/>
            <person name="Clifton W.S."/>
            <person name="Latreille P."/>
            <person name="Courtney L."/>
            <person name="Wang C."/>
            <person name="Pepin K."/>
            <person name="Bhonagiri V."/>
            <person name="Nash W."/>
            <person name="Johnson M."/>
            <person name="Thiruvilangam P."/>
            <person name="Wilson R."/>
        </authorList>
    </citation>
    <scope>NUCLEOTIDE SEQUENCE [LARGE SCALE GENOMIC DNA]</scope>
    <source>
        <strain>ATCC BAA-895 / CDC 4225-83 / SGSC4696</strain>
    </source>
</reference>
<sequence>MYQPDFPAVPFRLGLYPVVDSVQWIERLLEAGVRTLQLRIKDKRDEEVEDDVSAAIALGRRYNARLFINDYWRLAIKHNAYGVHLGQEDLETTDLKAIQAAGLRLGVSTHDDMEIDIALAARPSYIALGHVFPTQTKQMPSAPQGLEQLARHIERLGDYPTVAIGGISLERASPVLKTGVGSIAVVSAITRAEDWREATAQLLAIAGAGDE</sequence>
<name>THIE_CITK8</name>
<accession>A8AKT0</accession>
<proteinExistence type="inferred from homology"/>
<comment type="function">
    <text evidence="1">Condenses 4-methyl-5-(beta-hydroxyethyl)thiazole monophosphate (THZ-P) and 2-methyl-4-amino-5-hydroxymethyl pyrimidine pyrophosphate (HMP-PP) to form thiamine monophosphate (TMP).</text>
</comment>
<comment type="catalytic activity">
    <reaction evidence="1">
        <text>2-[(2R,5Z)-2-carboxy-4-methylthiazol-5(2H)-ylidene]ethyl phosphate + 4-amino-2-methyl-5-(diphosphooxymethyl)pyrimidine + 2 H(+) = thiamine phosphate + CO2 + diphosphate</text>
        <dbReference type="Rhea" id="RHEA:47844"/>
        <dbReference type="ChEBI" id="CHEBI:15378"/>
        <dbReference type="ChEBI" id="CHEBI:16526"/>
        <dbReference type="ChEBI" id="CHEBI:33019"/>
        <dbReference type="ChEBI" id="CHEBI:37575"/>
        <dbReference type="ChEBI" id="CHEBI:57841"/>
        <dbReference type="ChEBI" id="CHEBI:62899"/>
        <dbReference type="EC" id="2.5.1.3"/>
    </reaction>
</comment>
<comment type="catalytic activity">
    <reaction evidence="1">
        <text>2-(2-carboxy-4-methylthiazol-5-yl)ethyl phosphate + 4-amino-2-methyl-5-(diphosphooxymethyl)pyrimidine + 2 H(+) = thiamine phosphate + CO2 + diphosphate</text>
        <dbReference type="Rhea" id="RHEA:47848"/>
        <dbReference type="ChEBI" id="CHEBI:15378"/>
        <dbReference type="ChEBI" id="CHEBI:16526"/>
        <dbReference type="ChEBI" id="CHEBI:33019"/>
        <dbReference type="ChEBI" id="CHEBI:37575"/>
        <dbReference type="ChEBI" id="CHEBI:57841"/>
        <dbReference type="ChEBI" id="CHEBI:62890"/>
        <dbReference type="EC" id="2.5.1.3"/>
    </reaction>
</comment>
<comment type="catalytic activity">
    <reaction evidence="1">
        <text>4-methyl-5-(2-phosphooxyethyl)-thiazole + 4-amino-2-methyl-5-(diphosphooxymethyl)pyrimidine + H(+) = thiamine phosphate + diphosphate</text>
        <dbReference type="Rhea" id="RHEA:22328"/>
        <dbReference type="ChEBI" id="CHEBI:15378"/>
        <dbReference type="ChEBI" id="CHEBI:33019"/>
        <dbReference type="ChEBI" id="CHEBI:37575"/>
        <dbReference type="ChEBI" id="CHEBI:57841"/>
        <dbReference type="ChEBI" id="CHEBI:58296"/>
        <dbReference type="EC" id="2.5.1.3"/>
    </reaction>
</comment>
<comment type="cofactor">
    <cofactor evidence="1">
        <name>Mg(2+)</name>
        <dbReference type="ChEBI" id="CHEBI:18420"/>
    </cofactor>
    <text evidence="1">Binds 1 Mg(2+) ion per subunit.</text>
</comment>
<comment type="pathway">
    <text evidence="1">Cofactor biosynthesis; thiamine diphosphate biosynthesis; thiamine phosphate from 4-amino-2-methyl-5-diphosphomethylpyrimidine and 4-methyl-5-(2-phosphoethyl)-thiazole: step 1/1.</text>
</comment>
<comment type="similarity">
    <text evidence="1">Belongs to the thiamine-phosphate synthase family.</text>
</comment>
<keyword id="KW-0460">Magnesium</keyword>
<keyword id="KW-0479">Metal-binding</keyword>
<keyword id="KW-1185">Reference proteome</keyword>
<keyword id="KW-0784">Thiamine biosynthesis</keyword>
<keyword id="KW-0808">Transferase</keyword>
<organism>
    <name type="scientific">Citrobacter koseri (strain ATCC BAA-895 / CDC 4225-83 / SGSC4696)</name>
    <dbReference type="NCBI Taxonomy" id="290338"/>
    <lineage>
        <taxon>Bacteria</taxon>
        <taxon>Pseudomonadati</taxon>
        <taxon>Pseudomonadota</taxon>
        <taxon>Gammaproteobacteria</taxon>
        <taxon>Enterobacterales</taxon>
        <taxon>Enterobacteriaceae</taxon>
        <taxon>Citrobacter</taxon>
    </lineage>
</organism>
<feature type="chain" id="PRO_1000008133" description="Thiamine-phosphate synthase">
    <location>
        <begin position="1"/>
        <end position="211"/>
    </location>
</feature>
<feature type="binding site" evidence="1">
    <location>
        <begin position="37"/>
        <end position="41"/>
    </location>
    <ligand>
        <name>4-amino-2-methyl-5-(diphosphooxymethyl)pyrimidine</name>
        <dbReference type="ChEBI" id="CHEBI:57841"/>
    </ligand>
</feature>
<feature type="binding site" evidence="1">
    <location>
        <position position="69"/>
    </location>
    <ligand>
        <name>4-amino-2-methyl-5-(diphosphooxymethyl)pyrimidine</name>
        <dbReference type="ChEBI" id="CHEBI:57841"/>
    </ligand>
</feature>
<feature type="binding site" evidence="1">
    <location>
        <position position="70"/>
    </location>
    <ligand>
        <name>Mg(2+)</name>
        <dbReference type="ChEBI" id="CHEBI:18420"/>
    </ligand>
</feature>
<feature type="binding site" evidence="1">
    <location>
        <position position="89"/>
    </location>
    <ligand>
        <name>Mg(2+)</name>
        <dbReference type="ChEBI" id="CHEBI:18420"/>
    </ligand>
</feature>
<feature type="binding site" evidence="1">
    <location>
        <position position="108"/>
    </location>
    <ligand>
        <name>4-amino-2-methyl-5-(diphosphooxymethyl)pyrimidine</name>
        <dbReference type="ChEBI" id="CHEBI:57841"/>
    </ligand>
</feature>
<feature type="binding site" evidence="1">
    <location>
        <begin position="134"/>
        <end position="136"/>
    </location>
    <ligand>
        <name>2-[(2R,5Z)-2-carboxy-4-methylthiazol-5(2H)-ylidene]ethyl phosphate</name>
        <dbReference type="ChEBI" id="CHEBI:62899"/>
    </ligand>
</feature>
<feature type="binding site" evidence="1">
    <location>
        <position position="137"/>
    </location>
    <ligand>
        <name>4-amino-2-methyl-5-(diphosphooxymethyl)pyrimidine</name>
        <dbReference type="ChEBI" id="CHEBI:57841"/>
    </ligand>
</feature>
<feature type="binding site" evidence="1">
    <location>
        <position position="166"/>
    </location>
    <ligand>
        <name>2-[(2R,5Z)-2-carboxy-4-methylthiazol-5(2H)-ylidene]ethyl phosphate</name>
        <dbReference type="ChEBI" id="CHEBI:62899"/>
    </ligand>
</feature>
<feature type="binding site" evidence="1">
    <location>
        <begin position="186"/>
        <end position="187"/>
    </location>
    <ligand>
        <name>2-[(2R,5Z)-2-carboxy-4-methylthiazol-5(2H)-ylidene]ethyl phosphate</name>
        <dbReference type="ChEBI" id="CHEBI:62899"/>
    </ligand>
</feature>
<gene>
    <name evidence="1" type="primary">thiE</name>
    <name type="ordered locus">CKO_02993</name>
</gene>